<organism>
    <name type="scientific">Staphylococcus aureus (strain Mu50 / ATCC 700699)</name>
    <dbReference type="NCBI Taxonomy" id="158878"/>
    <lineage>
        <taxon>Bacteria</taxon>
        <taxon>Bacillati</taxon>
        <taxon>Bacillota</taxon>
        <taxon>Bacilli</taxon>
        <taxon>Bacillales</taxon>
        <taxon>Staphylococcaceae</taxon>
        <taxon>Staphylococcus</taxon>
    </lineage>
</organism>
<keyword id="KW-0067">ATP-binding</keyword>
<keyword id="KW-1003">Cell membrane</keyword>
<keyword id="KW-0418">Kinase</keyword>
<keyword id="KW-0472">Membrane</keyword>
<keyword id="KW-0547">Nucleotide-binding</keyword>
<keyword id="KW-0597">Phosphoprotein</keyword>
<keyword id="KW-0808">Transferase</keyword>
<keyword id="KW-0812">Transmembrane</keyword>
<keyword id="KW-1133">Transmembrane helix</keyword>
<keyword id="KW-0902">Two-component regulatory system</keyword>
<keyword id="KW-0843">Virulence</keyword>
<feature type="chain" id="PRO_0000295934" description="Histidine protein kinase SaeS">
    <location>
        <begin position="1"/>
        <end position="351"/>
    </location>
</feature>
<feature type="transmembrane region" description="Helical" evidence="2">
    <location>
        <begin position="9"/>
        <end position="29"/>
    </location>
</feature>
<feature type="transmembrane region" description="Helical" evidence="2">
    <location>
        <begin position="40"/>
        <end position="60"/>
    </location>
</feature>
<feature type="domain" description="HAMP" evidence="3">
    <location>
        <begin position="61"/>
        <end position="114"/>
    </location>
</feature>
<feature type="domain" description="Histidine kinase" evidence="4">
    <location>
        <begin position="129"/>
        <end position="348"/>
    </location>
</feature>
<feature type="modified residue" description="Phosphohistidine; by autocatalysis" evidence="4">
    <location>
        <position position="132"/>
    </location>
</feature>
<comment type="function">
    <text evidence="1">Member of the two-component regulatory system SaeR/SaeS involved in the regulation of staphylococcal virulence factors in a strain-dependent fashion. Probably functions as a membrane-associated protein kinase that upon sensing the appropriate signal, autophosphorylates and in turn activates the cytosolic response regulator SaeR (By similarity).</text>
</comment>
<comment type="catalytic activity">
    <reaction>
        <text>ATP + protein L-histidine = ADP + protein N-phospho-L-histidine.</text>
        <dbReference type="EC" id="2.7.13.3"/>
    </reaction>
</comment>
<comment type="subcellular location">
    <subcellularLocation>
        <location evidence="1">Cell membrane</location>
        <topology evidence="1">Multi-pass membrane protein</topology>
    </subcellularLocation>
</comment>
<comment type="PTM">
    <text evidence="1">Autophosphorylated.</text>
</comment>
<accession>Q99VR8</accession>
<reference key="1">
    <citation type="journal article" date="2001" name="Lancet">
        <title>Whole genome sequencing of meticillin-resistant Staphylococcus aureus.</title>
        <authorList>
            <person name="Kuroda M."/>
            <person name="Ohta T."/>
            <person name="Uchiyama I."/>
            <person name="Baba T."/>
            <person name="Yuzawa H."/>
            <person name="Kobayashi I."/>
            <person name="Cui L."/>
            <person name="Oguchi A."/>
            <person name="Aoki K."/>
            <person name="Nagai Y."/>
            <person name="Lian J.-Q."/>
            <person name="Ito T."/>
            <person name="Kanamori M."/>
            <person name="Matsumaru H."/>
            <person name="Maruyama A."/>
            <person name="Murakami H."/>
            <person name="Hosoyama A."/>
            <person name="Mizutani-Ui Y."/>
            <person name="Takahashi N.K."/>
            <person name="Sawano T."/>
            <person name="Inoue R."/>
            <person name="Kaito C."/>
            <person name="Sekimizu K."/>
            <person name="Hirakawa H."/>
            <person name="Kuhara S."/>
            <person name="Goto S."/>
            <person name="Yabuzaki J."/>
            <person name="Kanehisa M."/>
            <person name="Yamashita A."/>
            <person name="Oshima K."/>
            <person name="Furuya K."/>
            <person name="Yoshino C."/>
            <person name="Shiba T."/>
            <person name="Hattori M."/>
            <person name="Ogasawara N."/>
            <person name="Hayashi H."/>
            <person name="Hiramatsu K."/>
        </authorList>
    </citation>
    <scope>NUCLEOTIDE SEQUENCE [LARGE SCALE GENOMIC DNA]</scope>
    <source>
        <strain>Mu50 / ATCC 700699</strain>
    </source>
</reference>
<gene>
    <name type="primary">saeS</name>
    <name type="ordered locus">SAV0705</name>
</gene>
<evidence type="ECO:0000250" key="1"/>
<evidence type="ECO:0000255" key="2"/>
<evidence type="ECO:0000255" key="3">
    <source>
        <dbReference type="PROSITE-ProRule" id="PRU00102"/>
    </source>
</evidence>
<evidence type="ECO:0000255" key="4">
    <source>
        <dbReference type="PROSITE-ProRule" id="PRU00107"/>
    </source>
</evidence>
<dbReference type="EC" id="2.7.13.3"/>
<dbReference type="EMBL" id="BA000017">
    <property type="protein sequence ID" value="BAB56867.1"/>
    <property type="molecule type" value="Genomic_DNA"/>
</dbReference>
<dbReference type="RefSeq" id="WP_000244415.1">
    <property type="nucleotide sequence ID" value="NC_002758.2"/>
</dbReference>
<dbReference type="SMR" id="Q99VR8"/>
<dbReference type="KEGG" id="sav:SAV0705"/>
<dbReference type="HOGENOM" id="CLU_000445_89_3_9"/>
<dbReference type="PhylomeDB" id="Q99VR8"/>
<dbReference type="Proteomes" id="UP000002481">
    <property type="component" value="Chromosome"/>
</dbReference>
<dbReference type="GO" id="GO:0005886">
    <property type="term" value="C:plasma membrane"/>
    <property type="evidence" value="ECO:0007669"/>
    <property type="project" value="UniProtKB-SubCell"/>
</dbReference>
<dbReference type="GO" id="GO:0005524">
    <property type="term" value="F:ATP binding"/>
    <property type="evidence" value="ECO:0007669"/>
    <property type="project" value="UniProtKB-KW"/>
</dbReference>
<dbReference type="GO" id="GO:0004721">
    <property type="term" value="F:phosphoprotein phosphatase activity"/>
    <property type="evidence" value="ECO:0007669"/>
    <property type="project" value="TreeGrafter"/>
</dbReference>
<dbReference type="GO" id="GO:0000155">
    <property type="term" value="F:phosphorelay sensor kinase activity"/>
    <property type="evidence" value="ECO:0007669"/>
    <property type="project" value="InterPro"/>
</dbReference>
<dbReference type="GO" id="GO:0016036">
    <property type="term" value="P:cellular response to phosphate starvation"/>
    <property type="evidence" value="ECO:0007669"/>
    <property type="project" value="TreeGrafter"/>
</dbReference>
<dbReference type="CDD" id="cd00075">
    <property type="entry name" value="HATPase"/>
    <property type="match status" value="1"/>
</dbReference>
<dbReference type="CDD" id="cd00082">
    <property type="entry name" value="HisKA"/>
    <property type="match status" value="1"/>
</dbReference>
<dbReference type="FunFam" id="1.10.287.130:FF:000077">
    <property type="entry name" value="Sensor histidine kinase SaeS"/>
    <property type="match status" value="1"/>
</dbReference>
<dbReference type="Gene3D" id="1.10.287.130">
    <property type="match status" value="1"/>
</dbReference>
<dbReference type="Gene3D" id="6.10.340.10">
    <property type="match status" value="1"/>
</dbReference>
<dbReference type="Gene3D" id="3.30.565.10">
    <property type="entry name" value="Histidine kinase-like ATPase, C-terminal domain"/>
    <property type="match status" value="1"/>
</dbReference>
<dbReference type="InterPro" id="IPR050351">
    <property type="entry name" value="2-comp_sensor_kinase"/>
</dbReference>
<dbReference type="InterPro" id="IPR003660">
    <property type="entry name" value="HAMP_dom"/>
</dbReference>
<dbReference type="InterPro" id="IPR036890">
    <property type="entry name" value="HATPase_C_sf"/>
</dbReference>
<dbReference type="InterPro" id="IPR005467">
    <property type="entry name" value="His_kinase_dom"/>
</dbReference>
<dbReference type="InterPro" id="IPR003661">
    <property type="entry name" value="HisK_dim/P_dom"/>
</dbReference>
<dbReference type="InterPro" id="IPR036097">
    <property type="entry name" value="HisK_dim/P_sf"/>
</dbReference>
<dbReference type="InterPro" id="IPR004358">
    <property type="entry name" value="Sig_transdc_His_kin-like_C"/>
</dbReference>
<dbReference type="PANTHER" id="PTHR45453">
    <property type="entry name" value="PHOSPHATE REGULON SENSOR PROTEIN PHOR"/>
    <property type="match status" value="1"/>
</dbReference>
<dbReference type="PANTHER" id="PTHR45453:SF1">
    <property type="entry name" value="PHOSPHATE REGULON SENSOR PROTEIN PHOR"/>
    <property type="match status" value="1"/>
</dbReference>
<dbReference type="Pfam" id="PF00672">
    <property type="entry name" value="HAMP"/>
    <property type="match status" value="1"/>
</dbReference>
<dbReference type="Pfam" id="PF02518">
    <property type="entry name" value="HATPase_c"/>
    <property type="match status" value="1"/>
</dbReference>
<dbReference type="Pfam" id="PF00512">
    <property type="entry name" value="HisKA"/>
    <property type="match status" value="1"/>
</dbReference>
<dbReference type="PRINTS" id="PR00344">
    <property type="entry name" value="BCTRLSENSOR"/>
</dbReference>
<dbReference type="SMART" id="SM00387">
    <property type="entry name" value="HATPase_c"/>
    <property type="match status" value="1"/>
</dbReference>
<dbReference type="SMART" id="SM00388">
    <property type="entry name" value="HisKA"/>
    <property type="match status" value="1"/>
</dbReference>
<dbReference type="SUPFAM" id="SSF55874">
    <property type="entry name" value="ATPase domain of HSP90 chaperone/DNA topoisomerase II/histidine kinase"/>
    <property type="match status" value="1"/>
</dbReference>
<dbReference type="SUPFAM" id="SSF47384">
    <property type="entry name" value="Homodimeric domain of signal transducing histidine kinase"/>
    <property type="match status" value="1"/>
</dbReference>
<dbReference type="PROSITE" id="PS50885">
    <property type="entry name" value="HAMP"/>
    <property type="match status" value="1"/>
</dbReference>
<dbReference type="PROSITE" id="PS50109">
    <property type="entry name" value="HIS_KIN"/>
    <property type="match status" value="1"/>
</dbReference>
<proteinExistence type="inferred from homology"/>
<sequence length="351" mass="39714">MVLSIRSQIIIGVVSSILLTSTILAIAYILMWFNGHMTLTLTLTTIITSCLTLLICSIFINPLIQKIKQFNIKTKQFANGNYASNDKTFNSPKEIYELNQSFNKMASEITQQMNQIKSEQQEKTELIQNLAHDLKTPLASIISYSEGLRDGIITKDHEIKESYDILIKQANRLSTLFDDMTHIITLNTGKTYPPELIQLDQLLVSILQPYEQRIKHENRTLEVNFCSEIDAFYQYRTPLERILTNLLDNALKFSNVGSRIDINISENKDQDTIDIAISDEGIGIIPELQERIFERTFRVENSRNTKTGGSGLGLYIANELAQQNNAKISVSSDIDVGTTMTVTLHKLDITS</sequence>
<protein>
    <recommendedName>
        <fullName>Histidine protein kinase SaeS</fullName>
        <ecNumber>2.7.13.3</ecNumber>
    </recommendedName>
    <alternativeName>
        <fullName>Sensor protein SaeS</fullName>
    </alternativeName>
    <alternativeName>
        <fullName>Staphylococcus exoprotein expression protein S</fullName>
    </alternativeName>
</protein>
<name>SAES_STAAM</name>